<dbReference type="EMBL" id="AK308601">
    <property type="status" value="NOT_ANNOTATED_CDS"/>
    <property type="molecule type" value="mRNA"/>
</dbReference>
<dbReference type="EMBL" id="AC022272">
    <property type="status" value="NOT_ANNOTATED_CDS"/>
    <property type="molecule type" value="Genomic_DNA"/>
</dbReference>
<dbReference type="EMBL" id="CH471056">
    <property type="protein sequence ID" value="EAX04843.1"/>
    <property type="molecule type" value="Genomic_DNA"/>
</dbReference>
<dbReference type="EMBL" id="CH471056">
    <property type="protein sequence ID" value="EAX04844.1"/>
    <property type="molecule type" value="Genomic_DNA"/>
</dbReference>
<dbReference type="EMBL" id="BC008207">
    <property type="protein sequence ID" value="AAH08207.1"/>
    <property type="molecule type" value="mRNA"/>
</dbReference>
<dbReference type="CCDS" id="CCDS3803.1">
    <molecule id="Q96HR8-1"/>
</dbReference>
<dbReference type="CCDS" id="CCDS47159.1">
    <molecule id="Q96HR8-2"/>
</dbReference>
<dbReference type="RefSeq" id="NP_001122403.1">
    <molecule id="Q96HR8-2"/>
    <property type="nucleotide sequence ID" value="NM_001128931.2"/>
</dbReference>
<dbReference type="RefSeq" id="NP_612395.2">
    <molecule id="Q96HR8-1"/>
    <property type="nucleotide sequence ID" value="NM_138386.3"/>
</dbReference>
<dbReference type="RefSeq" id="XP_011530712.1">
    <molecule id="Q96HR8-1"/>
    <property type="nucleotide sequence ID" value="XM_011532410.4"/>
</dbReference>
<dbReference type="RefSeq" id="XP_054207218.1">
    <molecule id="Q96HR8-1"/>
    <property type="nucleotide sequence ID" value="XM_054351243.1"/>
</dbReference>
<dbReference type="PDB" id="2EQN">
    <property type="method" value="NMR"/>
    <property type="chains" value="A=181-276"/>
</dbReference>
<dbReference type="PDBsum" id="2EQN"/>
<dbReference type="SMR" id="Q96HR8"/>
<dbReference type="BioGRID" id="124938">
    <property type="interactions" value="140"/>
</dbReference>
<dbReference type="FunCoup" id="Q96HR8">
    <property type="interactions" value="1446"/>
</dbReference>
<dbReference type="IntAct" id="Q96HR8">
    <property type="interactions" value="96"/>
</dbReference>
<dbReference type="MINT" id="Q96HR8"/>
<dbReference type="STRING" id="9606.ENSP00000274054"/>
<dbReference type="GlyGen" id="Q96HR8">
    <property type="glycosylation" value="1 site, 1 O-linked glycan (1 site)"/>
</dbReference>
<dbReference type="iPTMnet" id="Q96HR8"/>
<dbReference type="PhosphoSitePlus" id="Q96HR8"/>
<dbReference type="BioMuta" id="NAF1"/>
<dbReference type="DMDM" id="296439238"/>
<dbReference type="jPOST" id="Q96HR8"/>
<dbReference type="MassIVE" id="Q96HR8"/>
<dbReference type="PaxDb" id="9606-ENSP00000274054"/>
<dbReference type="PeptideAtlas" id="Q96HR8"/>
<dbReference type="ProteomicsDB" id="19109"/>
<dbReference type="ProteomicsDB" id="76779">
    <molecule id="Q96HR8-1"/>
</dbReference>
<dbReference type="Pumba" id="Q96HR8"/>
<dbReference type="Antibodypedia" id="48823">
    <property type="antibodies" value="38 antibodies from 16 providers"/>
</dbReference>
<dbReference type="DNASU" id="92345"/>
<dbReference type="Ensembl" id="ENST00000274054.3">
    <molecule id="Q96HR8-1"/>
    <property type="protein sequence ID" value="ENSP00000274054.2"/>
    <property type="gene ID" value="ENSG00000145414.9"/>
</dbReference>
<dbReference type="Ensembl" id="ENST00000422287.6">
    <molecule id="Q96HR8-2"/>
    <property type="protein sequence ID" value="ENSP00000408963.2"/>
    <property type="gene ID" value="ENSG00000145414.9"/>
</dbReference>
<dbReference type="GeneID" id="92345"/>
<dbReference type="KEGG" id="hsa:92345"/>
<dbReference type="MANE-Select" id="ENST00000274054.3">
    <property type="protein sequence ID" value="ENSP00000274054.2"/>
    <property type="RefSeq nucleotide sequence ID" value="NM_138386.3"/>
    <property type="RefSeq protein sequence ID" value="NP_612395.2"/>
</dbReference>
<dbReference type="UCSC" id="uc003iqj.4">
    <molecule id="Q96HR8-1"/>
    <property type="organism name" value="human"/>
</dbReference>
<dbReference type="AGR" id="HGNC:25126"/>
<dbReference type="CTD" id="92345"/>
<dbReference type="DisGeNET" id="92345"/>
<dbReference type="GeneCards" id="NAF1"/>
<dbReference type="GeneReviews" id="NAF1"/>
<dbReference type="HGNC" id="HGNC:25126">
    <property type="gene designation" value="NAF1"/>
</dbReference>
<dbReference type="HPA" id="ENSG00000145414">
    <property type="expression patterns" value="Low tissue specificity"/>
</dbReference>
<dbReference type="MalaCards" id="NAF1"/>
<dbReference type="MIM" id="617868">
    <property type="type" value="gene"/>
</dbReference>
<dbReference type="MIM" id="620365">
    <property type="type" value="phenotype"/>
</dbReference>
<dbReference type="neXtProt" id="NX_Q96HR8"/>
<dbReference type="OpenTargets" id="ENSG00000145414"/>
<dbReference type="PharmGKB" id="PA162396775"/>
<dbReference type="VEuPathDB" id="HostDB:ENSG00000145414"/>
<dbReference type="eggNOG" id="KOG2236">
    <property type="taxonomic scope" value="Eukaryota"/>
</dbReference>
<dbReference type="GeneTree" id="ENSGT00390000004697"/>
<dbReference type="HOGENOM" id="CLU_032218_0_0_1"/>
<dbReference type="InParanoid" id="Q96HR8"/>
<dbReference type="OMA" id="WKNDDEP"/>
<dbReference type="OrthoDB" id="21550at2759"/>
<dbReference type="PAN-GO" id="Q96HR8">
    <property type="GO annotations" value="4 GO annotations based on evolutionary models"/>
</dbReference>
<dbReference type="PhylomeDB" id="Q96HR8"/>
<dbReference type="TreeFam" id="TF313273"/>
<dbReference type="PathwayCommons" id="Q96HR8"/>
<dbReference type="SignaLink" id="Q96HR8"/>
<dbReference type="BioGRID-ORCS" id="92345">
    <property type="hits" value="360 hits in 1154 CRISPR screens"/>
</dbReference>
<dbReference type="ChiTaRS" id="NAF1">
    <property type="organism name" value="human"/>
</dbReference>
<dbReference type="EvolutionaryTrace" id="Q96HR8"/>
<dbReference type="GenomeRNAi" id="92345"/>
<dbReference type="Pharos" id="Q96HR8">
    <property type="development level" value="Tbio"/>
</dbReference>
<dbReference type="PRO" id="PR:Q96HR8"/>
<dbReference type="Proteomes" id="UP000005640">
    <property type="component" value="Chromosome 4"/>
</dbReference>
<dbReference type="RNAct" id="Q96HR8">
    <property type="molecule type" value="protein"/>
</dbReference>
<dbReference type="Bgee" id="ENSG00000145414">
    <property type="expression patterns" value="Expressed in tibial artery and 176 other cell types or tissues"/>
</dbReference>
<dbReference type="ExpressionAtlas" id="Q96HR8">
    <property type="expression patterns" value="baseline and differential"/>
</dbReference>
<dbReference type="GO" id="GO:0005737">
    <property type="term" value="C:cytoplasm"/>
    <property type="evidence" value="ECO:0000315"/>
    <property type="project" value="UniProtKB"/>
</dbReference>
<dbReference type="GO" id="GO:0005654">
    <property type="term" value="C:nucleoplasm"/>
    <property type="evidence" value="ECO:0000314"/>
    <property type="project" value="HPA"/>
</dbReference>
<dbReference type="GO" id="GO:0005634">
    <property type="term" value="C:nucleus"/>
    <property type="evidence" value="ECO:0000315"/>
    <property type="project" value="UniProtKB"/>
</dbReference>
<dbReference type="GO" id="GO:0005732">
    <property type="term" value="C:sno(s)RNA-containing ribonucleoprotein complex"/>
    <property type="evidence" value="ECO:0000314"/>
    <property type="project" value="UniProtKB"/>
</dbReference>
<dbReference type="GO" id="GO:0042802">
    <property type="term" value="F:identical protein binding"/>
    <property type="evidence" value="ECO:0000353"/>
    <property type="project" value="IntAct"/>
</dbReference>
<dbReference type="GO" id="GO:0003723">
    <property type="term" value="F:RNA binding"/>
    <property type="evidence" value="ECO:0000314"/>
    <property type="project" value="UniProtKB"/>
</dbReference>
<dbReference type="GO" id="GO:0070034">
    <property type="term" value="F:telomerase RNA binding"/>
    <property type="evidence" value="ECO:0000353"/>
    <property type="project" value="BHF-UCL"/>
</dbReference>
<dbReference type="GO" id="GO:0000493">
    <property type="term" value="P:box H/ACA snoRNP assembly"/>
    <property type="evidence" value="ECO:0000250"/>
    <property type="project" value="BHF-UCL"/>
</dbReference>
<dbReference type="GO" id="GO:0032212">
    <property type="term" value="P:positive regulation of telomere maintenance via telomerase"/>
    <property type="evidence" value="ECO:0000315"/>
    <property type="project" value="BHF-UCL"/>
</dbReference>
<dbReference type="GO" id="GO:1904358">
    <property type="term" value="P:positive regulation of telomere maintenance via telomere lengthening"/>
    <property type="evidence" value="ECO:0000315"/>
    <property type="project" value="BHF-UCL"/>
</dbReference>
<dbReference type="GO" id="GO:0042254">
    <property type="term" value="P:ribosome biogenesis"/>
    <property type="evidence" value="ECO:0000314"/>
    <property type="project" value="UniProtKB"/>
</dbReference>
<dbReference type="GO" id="GO:0043489">
    <property type="term" value="P:RNA stabilization"/>
    <property type="evidence" value="ECO:0000250"/>
    <property type="project" value="UniProtKB"/>
</dbReference>
<dbReference type="GO" id="GO:0000454">
    <property type="term" value="P:snoRNA guided rRNA pseudouridine synthesis"/>
    <property type="evidence" value="ECO:0000250"/>
    <property type="project" value="BHF-UCL"/>
</dbReference>
<dbReference type="GO" id="GO:1905323">
    <property type="term" value="P:telomerase holoenzyme complex assembly"/>
    <property type="evidence" value="ECO:0000315"/>
    <property type="project" value="BHF-UCL"/>
</dbReference>
<dbReference type="GO" id="GO:0090671">
    <property type="term" value="P:telomerase RNA localization to Cajal body"/>
    <property type="evidence" value="ECO:0007001"/>
    <property type="project" value="BHF-UCL"/>
</dbReference>
<dbReference type="GO" id="GO:0090669">
    <property type="term" value="P:telomerase RNA stabilization"/>
    <property type="evidence" value="ECO:0000315"/>
    <property type="project" value="BHF-UCL"/>
</dbReference>
<dbReference type="FunFam" id="2.40.10.230:FF:000002">
    <property type="entry name" value="H/ACA ribonucleoprotein complex non-core subunit NAF1"/>
    <property type="match status" value="1"/>
</dbReference>
<dbReference type="Gene3D" id="2.40.10.230">
    <property type="entry name" value="Probable tRNA pseudouridine synthase domain"/>
    <property type="match status" value="1"/>
</dbReference>
<dbReference type="InterPro" id="IPR038664">
    <property type="entry name" value="Gar1/Naf1_Cbf5-bd_sf"/>
</dbReference>
<dbReference type="InterPro" id="IPR007504">
    <property type="entry name" value="H/ACA_rnp_Gar1/Naf1"/>
</dbReference>
<dbReference type="InterPro" id="IPR040309">
    <property type="entry name" value="Naf1"/>
</dbReference>
<dbReference type="InterPro" id="IPR009000">
    <property type="entry name" value="Transl_B-barrel_sf"/>
</dbReference>
<dbReference type="PANTHER" id="PTHR31633">
    <property type="entry name" value="H/ACA RIBONUCLEOPROTEIN COMPLEX NON-CORE SUBUNIT NAF1"/>
    <property type="match status" value="1"/>
</dbReference>
<dbReference type="PANTHER" id="PTHR31633:SF1">
    <property type="entry name" value="H_ACA RIBONUCLEOPROTEIN COMPLEX NON-CORE SUBUNIT NAF1"/>
    <property type="match status" value="1"/>
</dbReference>
<dbReference type="Pfam" id="PF04410">
    <property type="entry name" value="Gar1"/>
    <property type="match status" value="1"/>
</dbReference>
<dbReference type="SUPFAM" id="SSF50447">
    <property type="entry name" value="Translation proteins"/>
    <property type="match status" value="1"/>
</dbReference>
<keyword id="KW-0002">3D-structure</keyword>
<keyword id="KW-0007">Acetylation</keyword>
<keyword id="KW-0025">Alternative splicing</keyword>
<keyword id="KW-0963">Cytoplasm</keyword>
<keyword id="KW-1017">Isopeptide bond</keyword>
<keyword id="KW-0539">Nucleus</keyword>
<keyword id="KW-0597">Phosphoprotein</keyword>
<keyword id="KW-1267">Proteomics identification</keyword>
<keyword id="KW-1185">Reference proteome</keyword>
<keyword id="KW-0687">Ribonucleoprotein</keyword>
<keyword id="KW-0690">Ribosome biogenesis</keyword>
<keyword id="KW-0694">RNA-binding</keyword>
<keyword id="KW-0698">rRNA processing</keyword>
<keyword id="KW-0832">Ubl conjugation</keyword>
<evidence type="ECO:0000250" key="1">
    <source>
        <dbReference type="UniProtKB" id="P53919"/>
    </source>
</evidence>
<evidence type="ECO:0000256" key="2">
    <source>
        <dbReference type="SAM" id="MobiDB-lite"/>
    </source>
</evidence>
<evidence type="ECO:0000269" key="3">
    <source>
    </source>
</evidence>
<evidence type="ECO:0000269" key="4">
    <source>
    </source>
</evidence>
<evidence type="ECO:0000269" key="5">
    <source>
    </source>
</evidence>
<evidence type="ECO:0000269" key="6">
    <source>
    </source>
</evidence>
<evidence type="ECO:0000303" key="7">
    <source>
    </source>
</evidence>
<evidence type="ECO:0000305" key="8"/>
<evidence type="ECO:0007744" key="9">
    <source>
    </source>
</evidence>
<evidence type="ECO:0007744" key="10">
    <source>
    </source>
</evidence>
<evidence type="ECO:0007744" key="11">
    <source>
    </source>
</evidence>
<evidence type="ECO:0007744" key="12">
    <source>
    </source>
</evidence>
<evidence type="ECO:0007744" key="13">
    <source>
    </source>
</evidence>
<evidence type="ECO:0007744" key="14">
    <source>
    </source>
</evidence>
<evidence type="ECO:0007829" key="15">
    <source>
        <dbReference type="PDB" id="2EQN"/>
    </source>
</evidence>
<gene>
    <name type="primary">NAF1</name>
</gene>
<reference key="1">
    <citation type="journal article" date="2004" name="Nat. Genet.">
        <title>Complete sequencing and characterization of 21,243 full-length human cDNAs.</title>
        <authorList>
            <person name="Ota T."/>
            <person name="Suzuki Y."/>
            <person name="Nishikawa T."/>
            <person name="Otsuki T."/>
            <person name="Sugiyama T."/>
            <person name="Irie R."/>
            <person name="Wakamatsu A."/>
            <person name="Hayashi K."/>
            <person name="Sato H."/>
            <person name="Nagai K."/>
            <person name="Kimura K."/>
            <person name="Makita H."/>
            <person name="Sekine M."/>
            <person name="Obayashi M."/>
            <person name="Nishi T."/>
            <person name="Shibahara T."/>
            <person name="Tanaka T."/>
            <person name="Ishii S."/>
            <person name="Yamamoto J."/>
            <person name="Saito K."/>
            <person name="Kawai Y."/>
            <person name="Isono Y."/>
            <person name="Nakamura Y."/>
            <person name="Nagahari K."/>
            <person name="Murakami K."/>
            <person name="Yasuda T."/>
            <person name="Iwayanagi T."/>
            <person name="Wagatsuma M."/>
            <person name="Shiratori A."/>
            <person name="Sudo H."/>
            <person name="Hosoiri T."/>
            <person name="Kaku Y."/>
            <person name="Kodaira H."/>
            <person name="Kondo H."/>
            <person name="Sugawara M."/>
            <person name="Takahashi M."/>
            <person name="Kanda K."/>
            <person name="Yokoi T."/>
            <person name="Furuya T."/>
            <person name="Kikkawa E."/>
            <person name="Omura Y."/>
            <person name="Abe K."/>
            <person name="Kamihara K."/>
            <person name="Katsuta N."/>
            <person name="Sato K."/>
            <person name="Tanikawa M."/>
            <person name="Yamazaki M."/>
            <person name="Ninomiya K."/>
            <person name="Ishibashi T."/>
            <person name="Yamashita H."/>
            <person name="Murakawa K."/>
            <person name="Fujimori K."/>
            <person name="Tanai H."/>
            <person name="Kimata M."/>
            <person name="Watanabe M."/>
            <person name="Hiraoka S."/>
            <person name="Chiba Y."/>
            <person name="Ishida S."/>
            <person name="Ono Y."/>
            <person name="Takiguchi S."/>
            <person name="Watanabe S."/>
            <person name="Yosida M."/>
            <person name="Hotuta T."/>
            <person name="Kusano J."/>
            <person name="Kanehori K."/>
            <person name="Takahashi-Fujii A."/>
            <person name="Hara H."/>
            <person name="Tanase T.-O."/>
            <person name="Nomura Y."/>
            <person name="Togiya S."/>
            <person name="Komai F."/>
            <person name="Hara R."/>
            <person name="Takeuchi K."/>
            <person name="Arita M."/>
            <person name="Imose N."/>
            <person name="Musashino K."/>
            <person name="Yuuki H."/>
            <person name="Oshima A."/>
            <person name="Sasaki N."/>
            <person name="Aotsuka S."/>
            <person name="Yoshikawa Y."/>
            <person name="Matsunawa H."/>
            <person name="Ichihara T."/>
            <person name="Shiohata N."/>
            <person name="Sano S."/>
            <person name="Moriya S."/>
            <person name="Momiyama H."/>
            <person name="Satoh N."/>
            <person name="Takami S."/>
            <person name="Terashima Y."/>
            <person name="Suzuki O."/>
            <person name="Nakagawa S."/>
            <person name="Senoh A."/>
            <person name="Mizoguchi H."/>
            <person name="Goto Y."/>
            <person name="Shimizu F."/>
            <person name="Wakebe H."/>
            <person name="Hishigaki H."/>
            <person name="Watanabe T."/>
            <person name="Sugiyama A."/>
            <person name="Takemoto M."/>
            <person name="Kawakami B."/>
            <person name="Yamazaki M."/>
            <person name="Watanabe K."/>
            <person name="Kumagai A."/>
            <person name="Itakura S."/>
            <person name="Fukuzumi Y."/>
            <person name="Fujimori Y."/>
            <person name="Komiyama M."/>
            <person name="Tashiro H."/>
            <person name="Tanigami A."/>
            <person name="Fujiwara T."/>
            <person name="Ono T."/>
            <person name="Yamada K."/>
            <person name="Fujii Y."/>
            <person name="Ozaki K."/>
            <person name="Hirao M."/>
            <person name="Ohmori Y."/>
            <person name="Kawabata A."/>
            <person name="Hikiji T."/>
            <person name="Kobatake N."/>
            <person name="Inagaki H."/>
            <person name="Ikema Y."/>
            <person name="Okamoto S."/>
            <person name="Okitani R."/>
            <person name="Kawakami T."/>
            <person name="Noguchi S."/>
            <person name="Itoh T."/>
            <person name="Shigeta K."/>
            <person name="Senba T."/>
            <person name="Matsumura K."/>
            <person name="Nakajima Y."/>
            <person name="Mizuno T."/>
            <person name="Morinaga M."/>
            <person name="Sasaki M."/>
            <person name="Togashi T."/>
            <person name="Oyama M."/>
            <person name="Hata H."/>
            <person name="Watanabe M."/>
            <person name="Komatsu T."/>
            <person name="Mizushima-Sugano J."/>
            <person name="Satoh T."/>
            <person name="Shirai Y."/>
            <person name="Takahashi Y."/>
            <person name="Nakagawa K."/>
            <person name="Okumura K."/>
            <person name="Nagase T."/>
            <person name="Nomura N."/>
            <person name="Kikuchi H."/>
            <person name="Masuho Y."/>
            <person name="Yamashita R."/>
            <person name="Nakai K."/>
            <person name="Yada T."/>
            <person name="Nakamura Y."/>
            <person name="Ohara O."/>
            <person name="Isogai T."/>
            <person name="Sugano S."/>
        </authorList>
    </citation>
    <scope>NUCLEOTIDE SEQUENCE [LARGE SCALE MRNA] (ISOFORM 2)</scope>
    <source>
        <tissue>Cerebellum</tissue>
    </source>
</reference>
<reference key="2">
    <citation type="journal article" date="2005" name="Nature">
        <title>Generation and annotation of the DNA sequences of human chromosomes 2 and 4.</title>
        <authorList>
            <person name="Hillier L.W."/>
            <person name="Graves T.A."/>
            <person name="Fulton R.S."/>
            <person name="Fulton L.A."/>
            <person name="Pepin K.H."/>
            <person name="Minx P."/>
            <person name="Wagner-McPherson C."/>
            <person name="Layman D."/>
            <person name="Wylie K."/>
            <person name="Sekhon M."/>
            <person name="Becker M.C."/>
            <person name="Fewell G.A."/>
            <person name="Delehaunty K.D."/>
            <person name="Miner T.L."/>
            <person name="Nash W.E."/>
            <person name="Kremitzki C."/>
            <person name="Oddy L."/>
            <person name="Du H."/>
            <person name="Sun H."/>
            <person name="Bradshaw-Cordum H."/>
            <person name="Ali J."/>
            <person name="Carter J."/>
            <person name="Cordes M."/>
            <person name="Harris A."/>
            <person name="Isak A."/>
            <person name="van Brunt A."/>
            <person name="Nguyen C."/>
            <person name="Du F."/>
            <person name="Courtney L."/>
            <person name="Kalicki J."/>
            <person name="Ozersky P."/>
            <person name="Abbott S."/>
            <person name="Armstrong J."/>
            <person name="Belter E.A."/>
            <person name="Caruso L."/>
            <person name="Cedroni M."/>
            <person name="Cotton M."/>
            <person name="Davidson T."/>
            <person name="Desai A."/>
            <person name="Elliott G."/>
            <person name="Erb T."/>
            <person name="Fronick C."/>
            <person name="Gaige T."/>
            <person name="Haakenson W."/>
            <person name="Haglund K."/>
            <person name="Holmes A."/>
            <person name="Harkins R."/>
            <person name="Kim K."/>
            <person name="Kruchowski S.S."/>
            <person name="Strong C.M."/>
            <person name="Grewal N."/>
            <person name="Goyea E."/>
            <person name="Hou S."/>
            <person name="Levy A."/>
            <person name="Martinka S."/>
            <person name="Mead K."/>
            <person name="McLellan M.D."/>
            <person name="Meyer R."/>
            <person name="Randall-Maher J."/>
            <person name="Tomlinson C."/>
            <person name="Dauphin-Kohlberg S."/>
            <person name="Kozlowicz-Reilly A."/>
            <person name="Shah N."/>
            <person name="Swearengen-Shahid S."/>
            <person name="Snider J."/>
            <person name="Strong J.T."/>
            <person name="Thompson J."/>
            <person name="Yoakum M."/>
            <person name="Leonard S."/>
            <person name="Pearman C."/>
            <person name="Trani L."/>
            <person name="Radionenko M."/>
            <person name="Waligorski J.E."/>
            <person name="Wang C."/>
            <person name="Rock S.M."/>
            <person name="Tin-Wollam A.-M."/>
            <person name="Maupin R."/>
            <person name="Latreille P."/>
            <person name="Wendl M.C."/>
            <person name="Yang S.-P."/>
            <person name="Pohl C."/>
            <person name="Wallis J.W."/>
            <person name="Spieth J."/>
            <person name="Bieri T.A."/>
            <person name="Berkowicz N."/>
            <person name="Nelson J.O."/>
            <person name="Osborne J."/>
            <person name="Ding L."/>
            <person name="Meyer R."/>
            <person name="Sabo A."/>
            <person name="Shotland Y."/>
            <person name="Sinha P."/>
            <person name="Wohldmann P.E."/>
            <person name="Cook L.L."/>
            <person name="Hickenbotham M.T."/>
            <person name="Eldred J."/>
            <person name="Williams D."/>
            <person name="Jones T.A."/>
            <person name="She X."/>
            <person name="Ciccarelli F.D."/>
            <person name="Izaurralde E."/>
            <person name="Taylor J."/>
            <person name="Schmutz J."/>
            <person name="Myers R.M."/>
            <person name="Cox D.R."/>
            <person name="Huang X."/>
            <person name="McPherson J.D."/>
            <person name="Mardis E.R."/>
            <person name="Clifton S.W."/>
            <person name="Warren W.C."/>
            <person name="Chinwalla A.T."/>
            <person name="Eddy S.R."/>
            <person name="Marra M.A."/>
            <person name="Ovcharenko I."/>
            <person name="Furey T.S."/>
            <person name="Miller W."/>
            <person name="Eichler E.E."/>
            <person name="Bork P."/>
            <person name="Suyama M."/>
            <person name="Torrents D."/>
            <person name="Waterston R.H."/>
            <person name="Wilson R.K."/>
        </authorList>
    </citation>
    <scope>NUCLEOTIDE SEQUENCE [LARGE SCALE GENOMIC DNA]</scope>
</reference>
<reference key="3">
    <citation type="submission" date="2005-09" db="EMBL/GenBank/DDBJ databases">
        <authorList>
            <person name="Mural R.J."/>
            <person name="Istrail S."/>
            <person name="Sutton G.G."/>
            <person name="Florea L."/>
            <person name="Halpern A.L."/>
            <person name="Mobarry C.M."/>
            <person name="Lippert R."/>
            <person name="Walenz B."/>
            <person name="Shatkay H."/>
            <person name="Dew I."/>
            <person name="Miller J.R."/>
            <person name="Flanigan M.J."/>
            <person name="Edwards N.J."/>
            <person name="Bolanos R."/>
            <person name="Fasulo D."/>
            <person name="Halldorsson B.V."/>
            <person name="Hannenhalli S."/>
            <person name="Turner R."/>
            <person name="Yooseph S."/>
            <person name="Lu F."/>
            <person name="Nusskern D.R."/>
            <person name="Shue B.C."/>
            <person name="Zheng X.H."/>
            <person name="Zhong F."/>
            <person name="Delcher A.L."/>
            <person name="Huson D.H."/>
            <person name="Kravitz S.A."/>
            <person name="Mouchard L."/>
            <person name="Reinert K."/>
            <person name="Remington K.A."/>
            <person name="Clark A.G."/>
            <person name="Waterman M.S."/>
            <person name="Eichler E.E."/>
            <person name="Adams M.D."/>
            <person name="Hunkapiller M.W."/>
            <person name="Myers E.W."/>
            <person name="Venter J.C."/>
        </authorList>
    </citation>
    <scope>NUCLEOTIDE SEQUENCE [LARGE SCALE GENOMIC DNA]</scope>
</reference>
<reference key="4">
    <citation type="journal article" date="2004" name="Genome Res.">
        <title>The status, quality, and expansion of the NIH full-length cDNA project: the Mammalian Gene Collection (MGC).</title>
        <authorList>
            <consortium name="The MGC Project Team"/>
        </authorList>
    </citation>
    <scope>NUCLEOTIDE SEQUENCE [LARGE SCALE MRNA] (ISOFORM 1)</scope>
    <scope>VARIANT VAL-162</scope>
    <source>
        <tissue>Placenta</tissue>
    </source>
</reference>
<reference key="5">
    <citation type="journal article" date="2006" name="Cell">
        <title>Global, in vivo, and site-specific phosphorylation dynamics in signaling networks.</title>
        <authorList>
            <person name="Olsen J.V."/>
            <person name="Blagoev B."/>
            <person name="Gnad F."/>
            <person name="Macek B."/>
            <person name="Kumar C."/>
            <person name="Mortensen P."/>
            <person name="Mann M."/>
        </authorList>
    </citation>
    <scope>PHOSPHORYLATION [LARGE SCALE ANALYSIS] AT SER-315</scope>
    <scope>IDENTIFICATION BY MASS SPECTROMETRY [LARGE SCALE ANALYSIS]</scope>
    <source>
        <tissue>Cervix carcinoma</tissue>
    </source>
</reference>
<reference key="6">
    <citation type="journal article" date="2006" name="J. Cell Biol.">
        <title>Stepwise RNP assembly at the site of H/ACA RNA transcription in human cells.</title>
        <authorList>
            <person name="Darzacq X."/>
            <person name="Kittur N."/>
            <person name="Roy S."/>
            <person name="Shav-Tal Y."/>
            <person name="Singer R.H."/>
            <person name="Meier U.T."/>
        </authorList>
    </citation>
    <scope>FUNCTION</scope>
    <scope>SUBCELLULAR LOCATION</scope>
    <scope>INTERACTION WITH DKC1</scope>
</reference>
<reference key="7">
    <citation type="journal article" date="2006" name="RNA">
        <title>hNaf1 is required for accumulation of human box H/ACA snoRNPs, scaRNPs, and telomerase.</title>
        <authorList>
            <person name="Hoareau-Aveilla C."/>
            <person name="Bonoli M."/>
            <person name="Caizergues-Ferrer M."/>
            <person name="Henry Y."/>
        </authorList>
    </citation>
    <scope>SUBCELLULAR LOCATION</scope>
    <scope>INTERACTION WITH DKC1 AND NOLA3</scope>
</reference>
<reference key="8">
    <citation type="journal article" date="2006" name="RNA">
        <title>Dynamic association and localization of human H/ACA RNP proteins.</title>
        <authorList>
            <person name="Kittur N."/>
            <person name="Darzacq X."/>
            <person name="Roy S."/>
            <person name="Singer R.H."/>
            <person name="Meier U.T."/>
        </authorList>
    </citation>
    <scope>SUBCELLULAR LOCATION</scope>
</reference>
<reference key="9">
    <citation type="journal article" date="2008" name="Proc. Natl. Acad. Sci. U.S.A.">
        <title>A quantitative atlas of mitotic phosphorylation.</title>
        <authorList>
            <person name="Dephoure N."/>
            <person name="Zhou C."/>
            <person name="Villen J."/>
            <person name="Beausoleil S.A."/>
            <person name="Bakalarski C.E."/>
            <person name="Elledge S.J."/>
            <person name="Gygi S.P."/>
        </authorList>
    </citation>
    <scope>IDENTIFICATION BY MASS SPECTROMETRY [LARGE SCALE ANALYSIS]</scope>
    <source>
        <tissue>Cervix carcinoma</tissue>
    </source>
</reference>
<reference key="10">
    <citation type="journal article" date="2009" name="Anal. Chem.">
        <title>Lys-N and trypsin cover complementary parts of the phosphoproteome in a refined SCX-based approach.</title>
        <authorList>
            <person name="Gauci S."/>
            <person name="Helbig A.O."/>
            <person name="Slijper M."/>
            <person name="Krijgsveld J."/>
            <person name="Heck A.J."/>
            <person name="Mohammed S."/>
        </authorList>
    </citation>
    <scope>ACETYLATION [LARGE SCALE ANALYSIS] AT MET-1</scope>
    <scope>IDENTIFICATION BY MASS SPECTROMETRY [LARGE SCALE ANALYSIS]</scope>
</reference>
<reference key="11">
    <citation type="journal article" date="2010" name="Sci. Signal.">
        <title>Quantitative phosphoproteomics reveals widespread full phosphorylation site occupancy during mitosis.</title>
        <authorList>
            <person name="Olsen J.V."/>
            <person name="Vermeulen M."/>
            <person name="Santamaria A."/>
            <person name="Kumar C."/>
            <person name="Miller M.L."/>
            <person name="Jensen L.J."/>
            <person name="Gnad F."/>
            <person name="Cox J."/>
            <person name="Jensen T.S."/>
            <person name="Nigg E.A."/>
            <person name="Brunak S."/>
            <person name="Mann M."/>
        </authorList>
    </citation>
    <scope>PHOSPHORYLATION [LARGE SCALE ANALYSIS] AT SER-315</scope>
    <scope>IDENTIFICATION BY MASS SPECTROMETRY [LARGE SCALE ANALYSIS]</scope>
    <source>
        <tissue>Cervix carcinoma</tissue>
    </source>
</reference>
<reference key="12">
    <citation type="journal article" date="2011" name="BMC Syst. Biol.">
        <title>Initial characterization of the human central proteome.</title>
        <authorList>
            <person name="Burkard T.R."/>
            <person name="Planyavsky M."/>
            <person name="Kaupe I."/>
            <person name="Breitwieser F.P."/>
            <person name="Buerckstuemmer T."/>
            <person name="Bennett K.L."/>
            <person name="Superti-Furga G."/>
            <person name="Colinge J."/>
        </authorList>
    </citation>
    <scope>IDENTIFICATION BY MASS SPECTROMETRY [LARGE SCALE ANALYSIS]</scope>
</reference>
<reference key="13">
    <citation type="journal article" date="2011" name="Sci. Signal.">
        <title>System-wide temporal characterization of the proteome and phosphoproteome of human embryonic stem cell differentiation.</title>
        <authorList>
            <person name="Rigbolt K.T."/>
            <person name="Prokhorova T.A."/>
            <person name="Akimov V."/>
            <person name="Henningsen J."/>
            <person name="Johansen P.T."/>
            <person name="Kratchmarova I."/>
            <person name="Kassem M."/>
            <person name="Mann M."/>
            <person name="Olsen J.V."/>
            <person name="Blagoev B."/>
        </authorList>
    </citation>
    <scope>PHOSPHORYLATION [LARGE SCALE ANALYSIS] AT SER-315</scope>
    <scope>IDENTIFICATION BY MASS SPECTROMETRY [LARGE SCALE ANALYSIS]</scope>
</reference>
<reference key="14">
    <citation type="journal article" date="2013" name="J. Proteome Res.">
        <title>Toward a comprehensive characterization of a human cancer cell phosphoproteome.</title>
        <authorList>
            <person name="Zhou H."/>
            <person name="Di Palma S."/>
            <person name="Preisinger C."/>
            <person name="Peng M."/>
            <person name="Polat A.N."/>
            <person name="Heck A.J."/>
            <person name="Mohammed S."/>
        </authorList>
    </citation>
    <scope>PHOSPHORYLATION [LARGE SCALE ANALYSIS] AT SER-315</scope>
    <scope>IDENTIFICATION BY MASS SPECTROMETRY [LARGE SCALE ANALYSIS]</scope>
    <source>
        <tissue>Cervix carcinoma</tissue>
        <tissue>Erythroleukemia</tissue>
    </source>
</reference>
<reference key="15">
    <citation type="journal article" date="2016" name="Sci. Transl. Med.">
        <title>Loss-of-function mutations in the RNA biogenesis factor NAF1 predispose to pulmonary fibrosis-emphysema.</title>
        <authorList>
            <person name="Stanley S.E."/>
            <person name="Gable D.L."/>
            <person name="Wagner C.L."/>
            <person name="Carlile T.M."/>
            <person name="Hanumanthu V.S."/>
            <person name="Podlevsky J.D."/>
            <person name="Khalil S.E."/>
            <person name="DeZern A.E."/>
            <person name="Rojas-Duran M.F."/>
            <person name="Applegate C.D."/>
            <person name="Alder J.K."/>
            <person name="Parry E.M."/>
            <person name="Gilbert W.V."/>
            <person name="Armanios M."/>
        </authorList>
    </citation>
    <scope>INVOLVEMENT IN PFBMFT7</scope>
    <scope>SUBCELLULAR LOCATION</scope>
</reference>
<reference key="16">
    <citation type="journal article" date="2017" name="Nat. Struct. Mol. Biol.">
        <title>Site-specific mapping of the human SUMO proteome reveals co-modification with phosphorylation.</title>
        <authorList>
            <person name="Hendriks I.A."/>
            <person name="Lyon D."/>
            <person name="Young C."/>
            <person name="Jensen L.J."/>
            <person name="Vertegaal A.C."/>
            <person name="Nielsen M.L."/>
        </authorList>
    </citation>
    <scope>SUMOYLATION [LARGE SCALE ANALYSIS] AT LYS-338</scope>
    <scope>IDENTIFICATION BY MASS SPECTROMETRY [LARGE SCALE ANALYSIS]</scope>
</reference>
<reference key="17">
    <citation type="submission" date="2007-10" db="PDB data bank">
        <title>Solution structure of the NAF1 domain of hypothetical protein BC008207 [Homo sapiens].</title>
        <authorList>
            <consortium name="RIKEN structural genomics initiative (RSGI)"/>
        </authorList>
    </citation>
    <scope>STRUCTURE BY NMR OF 181-276</scope>
</reference>
<organism>
    <name type="scientific">Homo sapiens</name>
    <name type="common">Human</name>
    <dbReference type="NCBI Taxonomy" id="9606"/>
    <lineage>
        <taxon>Eukaryota</taxon>
        <taxon>Metazoa</taxon>
        <taxon>Chordata</taxon>
        <taxon>Craniata</taxon>
        <taxon>Vertebrata</taxon>
        <taxon>Euteleostomi</taxon>
        <taxon>Mammalia</taxon>
        <taxon>Eutheria</taxon>
        <taxon>Euarchontoglires</taxon>
        <taxon>Primates</taxon>
        <taxon>Haplorrhini</taxon>
        <taxon>Catarrhini</taxon>
        <taxon>Hominidae</taxon>
        <taxon>Homo</taxon>
    </lineage>
</organism>
<comment type="function">
    <text evidence="5">RNA-binding protein required for the maturation of box H/ACA snoRNPs complex and ribosome biogenesis. During assembly of the H/ACA snoRNPs complex, it associates with the complex and disappears during maturation of the complex and is replaced by NOLA1/GAR1 to yield mature H/ACA snoRNPs complex. Probably competes with NOLA1/GAR1 for binding with DKC1/NOLA4.</text>
</comment>
<comment type="subunit">
    <text evidence="4 5">During assembly of the complex, component of the small nucleolar ribonucleoprotein particles containing H/ACA-type snoRNAs (H/ACA snoRNPs) which contains NOLA2/NHP2, NOLA3/NOP10, NAF1 and DKC1/NOLA4. Interacts directly with DKC1/NOLA4.</text>
</comment>
<comment type="interaction">
    <interactant intactId="EBI-2515597">
        <id>Q96HR8</id>
    </interactant>
    <interactant intactId="EBI-11983447">
        <id>Q8N9W6-4</id>
        <label>BOLL</label>
    </interactant>
    <organismsDiffer>false</organismsDiffer>
    <experiments>3</experiments>
</comment>
<comment type="interaction">
    <interactant intactId="EBI-2515597">
        <id>Q96HR8</id>
    </interactant>
    <interactant intactId="EBI-7875264">
        <id>O75553</id>
        <label>DAB1</label>
    </interactant>
    <organismsDiffer>false</organismsDiffer>
    <experiments>3</experiments>
</comment>
<comment type="interaction">
    <interactant intactId="EBI-2515597">
        <id>Q96HR8</id>
    </interactant>
    <interactant intactId="EBI-724310">
        <id>Q15038</id>
        <label>DAZAP2</label>
    </interactant>
    <organismsDiffer>false</organismsDiffer>
    <experiments>3</experiments>
</comment>
<comment type="interaction">
    <interactant intactId="EBI-2515597">
        <id>Q96HR8</id>
    </interactant>
    <interactant intactId="EBI-713091">
        <id>O60832</id>
        <label>DKC1</label>
    </interactant>
    <organismsDiffer>false</organismsDiffer>
    <experiments>12</experiments>
</comment>
<comment type="interaction">
    <interactant intactId="EBI-2515597">
        <id>Q96HR8</id>
    </interactant>
    <interactant intactId="EBI-742350">
        <id>Q14241</id>
        <label>ELOA</label>
    </interactant>
    <organismsDiffer>false</organismsDiffer>
    <experiments>3</experiments>
</comment>
<comment type="interaction">
    <interactant intactId="EBI-2515597">
        <id>Q96HR8</id>
    </interactant>
    <interactant intactId="EBI-7957930">
        <id>Q92567</id>
        <label>FAM168A</label>
    </interactant>
    <organismsDiffer>false</organismsDiffer>
    <experiments>3</experiments>
</comment>
<comment type="interaction">
    <interactant intactId="EBI-2515597">
        <id>Q96HR8</id>
    </interactant>
    <interactant intactId="EBI-11978259">
        <id>Q92567-2</id>
        <label>FAM168A</label>
    </interactant>
    <organismsDiffer>false</organismsDiffer>
    <experiments>3</experiments>
</comment>
<comment type="interaction">
    <interactant intactId="EBI-2515597">
        <id>Q96HR8</id>
    </interactant>
    <interactant intactId="EBI-12121668">
        <id>Q96AE4-2</id>
        <label>FUBP1</label>
    </interactant>
    <organismsDiffer>false</organismsDiffer>
    <experiments>3</experiments>
</comment>
<comment type="interaction">
    <interactant intactId="EBI-2515597">
        <id>Q96HR8</id>
    </interactant>
    <interactant intactId="EBI-2868124">
        <id>Q9BSE4</id>
        <label>HERPUD2</label>
    </interactant>
    <organismsDiffer>false</organismsDiffer>
    <experiments>3</experiments>
</comment>
<comment type="interaction">
    <interactant intactId="EBI-2515597">
        <id>Q96HR8</id>
    </interactant>
    <interactant intactId="EBI-12020132">
        <id>Q7Z4W3</id>
        <label>KRTAP19-3</label>
    </interactant>
    <organismsDiffer>false</organismsDiffer>
    <experiments>3</experiments>
</comment>
<comment type="interaction">
    <interactant intactId="EBI-2515597">
        <id>Q96HR8</id>
    </interactant>
    <interactant intactId="EBI-10241353">
        <id>Q3SYF9</id>
        <label>KRTAP19-7</label>
    </interactant>
    <organismsDiffer>false</organismsDiffer>
    <experiments>3</experiments>
</comment>
<comment type="interaction">
    <interactant intactId="EBI-2515597">
        <id>Q96HR8</id>
    </interactant>
    <interactant intactId="EBI-12111050">
        <id>Q3LI64</id>
        <label>KRTAP6-1</label>
    </interactant>
    <organismsDiffer>false</organismsDiffer>
    <experiments>3</experiments>
</comment>
<comment type="interaction">
    <interactant intactId="EBI-2515597">
        <id>Q96HR8</id>
    </interactant>
    <interactant intactId="EBI-11962084">
        <id>Q3LI66</id>
        <label>KRTAP6-2</label>
    </interactant>
    <organismsDiffer>false</organismsDiffer>
    <experiments>3</experiments>
</comment>
<comment type="interaction">
    <interactant intactId="EBI-2515597">
        <id>Q96HR8</id>
    </interactant>
    <interactant intactId="EBI-716006">
        <id>Q9Y5V3</id>
        <label>MAGED1</label>
    </interactant>
    <organismsDiffer>false</organismsDiffer>
    <experiments>3</experiments>
</comment>
<comment type="interaction">
    <interactant intactId="EBI-2515597">
        <id>Q96HR8</id>
    </interactant>
    <interactant intactId="EBI-394707">
        <id>Q9Y3C7</id>
        <label>MED31</label>
    </interactant>
    <organismsDiffer>false</organismsDiffer>
    <experiments>3</experiments>
</comment>
<comment type="interaction">
    <interactant intactId="EBI-2515597">
        <id>Q96HR8</id>
    </interactant>
    <interactant intactId="EBI-6447480">
        <id>P35548</id>
        <label>MSX2</label>
    </interactant>
    <organismsDiffer>false</organismsDiffer>
    <experiments>3</experiments>
</comment>
<comment type="interaction">
    <interactant intactId="EBI-2515597">
        <id>Q96HR8</id>
    </interactant>
    <interactant intactId="EBI-2515597">
        <id>Q96HR8</id>
        <label>NAF1</label>
    </interactant>
    <organismsDiffer>false</organismsDiffer>
    <experiments>3</experiments>
</comment>
<comment type="interaction">
    <interactant intactId="EBI-2515597">
        <id>Q96HR8</id>
    </interactant>
    <interactant intactId="EBI-744023">
        <id>Q9BTL3</id>
        <label>RAMAC</label>
    </interactant>
    <organismsDiffer>false</organismsDiffer>
    <experiments>3</experiments>
</comment>
<comment type="interaction">
    <interactant intactId="EBI-2515597">
        <id>Q96HR8</id>
    </interactant>
    <interactant intactId="EBI-746056">
        <id>O43251</id>
        <label>RBFOX2</label>
    </interactant>
    <organismsDiffer>false</organismsDiffer>
    <experiments>3</experiments>
</comment>
<comment type="interaction">
    <interactant intactId="EBI-2515597">
        <id>Q96HR8</id>
    </interactant>
    <interactant intactId="EBI-2481535">
        <id>Q8WV41</id>
        <label>SNX33</label>
    </interactant>
    <organismsDiffer>false</organismsDiffer>
    <experiments>4</experiments>
</comment>
<comment type="interaction">
    <interactant intactId="EBI-2515597">
        <id>Q96HR8</id>
    </interactant>
    <interactant intactId="EBI-741237">
        <id>O60504</id>
        <label>SORBS3</label>
    </interactant>
    <organismsDiffer>false</organismsDiffer>
    <experiments>3</experiments>
</comment>
<comment type="interaction">
    <interactant intactId="EBI-2515597">
        <id>Q96HR8</id>
    </interactant>
    <interactant intactId="EBI-12035119">
        <id>O75177-5</id>
        <label>SS18L1</label>
    </interactant>
    <organismsDiffer>false</organismsDiffer>
    <experiments>3</experiments>
</comment>
<comment type="interaction">
    <interactant intactId="EBI-2515597">
        <id>Q96HR8</id>
    </interactant>
    <interactant intactId="EBI-752030">
        <id>Q96A09</id>
        <label>TENT5B</label>
    </interactant>
    <organismsDiffer>false</organismsDiffer>
    <experiments>3</experiments>
</comment>
<comment type="interaction">
    <interactant intactId="EBI-2515597">
        <id>Q96HR8</id>
    </interactant>
    <interactant intactId="EBI-11741437">
        <id>Q08117-2</id>
        <label>TLE5</label>
    </interactant>
    <organismsDiffer>false</organismsDiffer>
    <experiments>5</experiments>
</comment>
<comment type="interaction">
    <interactant intactId="EBI-2515597">
        <id>Q96HR8</id>
    </interactant>
    <interactant intactId="EBI-10180829">
        <id>Q7KZS0</id>
        <label>UBE2I</label>
    </interactant>
    <organismsDiffer>false</organismsDiffer>
    <experiments>5</experiments>
</comment>
<comment type="interaction">
    <interactant intactId="EBI-2515597">
        <id>Q96HR8</id>
    </interactant>
    <interactant intactId="EBI-5746997">
        <id>P40615</id>
        <label>Dkc1</label>
    </interactant>
    <organismsDiffer>true</organismsDiffer>
    <experiments>3</experiments>
</comment>
<comment type="subcellular location">
    <subcellularLocation>
        <location evidence="6">Cytoplasm</location>
    </subcellularLocation>
    <subcellularLocation>
        <location evidence="6">Nucleus</location>
    </subcellularLocation>
    <text evidence="1">Shuttles between the cytoplasm and the nucleus. Absent from the nucleolus (By similarity).</text>
</comment>
<comment type="alternative products">
    <event type="alternative splicing"/>
    <isoform>
        <id>Q96HR8-1</id>
        <name>1</name>
        <sequence type="displayed"/>
    </isoform>
    <isoform>
        <id>Q96HR8-2</id>
        <name>2</name>
        <sequence type="described" ref="VSP_046217 VSP_046218"/>
    </isoform>
</comment>
<comment type="disease" evidence="6">
    <disease id="DI-06677">
        <name>Pulmonary fibrosis, and/or bone marrow failure syndrome, telomere-related, 7</name>
        <acronym>PFBMFT7</acronym>
        <description>An autosomal dominant disease associated with shortened telomeres. Pulmonary fibrosis is the most common manifestation. Other features include aplastic anemia due to bone marrow failure, hepatic fibrosis, and increased cancer risk. Phenotype, age at onset, and severity are determined by telomere length. PFBMFT7 patients manifest anemia, lymphopenia, liver involvement with portal hypertension and hepatopulmonary syndrome, premature graying of the hair, nail dystrophy, and predisposition to squamous cell cancers or myelodysplasia.</description>
        <dbReference type="MIM" id="620365"/>
    </disease>
    <text>The disease is caused by variants affecting the gene represented in this entry.</text>
</comment>
<comment type="similarity">
    <text evidence="8">Belongs to the NAF1 family.</text>
</comment>
<accession>Q96HR8</accession>
<accession>D3DP28</accession>
<accession>E9PAZ2</accession>
<feature type="chain" id="PRO_0000315637" description="H/ACA ribonucleoprotein complex non-core subunit NAF1">
    <location>
        <begin position="1"/>
        <end position="494"/>
    </location>
</feature>
<feature type="region of interest" description="Disordered" evidence="2">
    <location>
        <begin position="18"/>
        <end position="159"/>
    </location>
</feature>
<feature type="region of interest" description="Disordered" evidence="2">
    <location>
        <begin position="296"/>
        <end position="347"/>
    </location>
</feature>
<feature type="region of interest" description="Disordered" evidence="2">
    <location>
        <begin position="462"/>
        <end position="494"/>
    </location>
</feature>
<feature type="compositionally biased region" description="Pro residues" evidence="2">
    <location>
        <begin position="29"/>
        <end position="41"/>
    </location>
</feature>
<feature type="compositionally biased region" description="Acidic residues" evidence="2">
    <location>
        <begin position="112"/>
        <end position="126"/>
    </location>
</feature>
<feature type="compositionally biased region" description="Low complexity" evidence="2">
    <location>
        <begin position="127"/>
        <end position="145"/>
    </location>
</feature>
<feature type="compositionally biased region" description="Basic and acidic residues" evidence="2">
    <location>
        <begin position="296"/>
        <end position="305"/>
    </location>
</feature>
<feature type="compositionally biased region" description="Basic residues" evidence="2">
    <location>
        <begin position="324"/>
        <end position="337"/>
    </location>
</feature>
<feature type="compositionally biased region" description="Pro residues" evidence="2">
    <location>
        <begin position="467"/>
        <end position="482"/>
    </location>
</feature>
<feature type="compositionally biased region" description="Polar residues" evidence="2">
    <location>
        <begin position="484"/>
        <end position="494"/>
    </location>
</feature>
<feature type="modified residue" description="N-acetylmethionine" evidence="10">
    <location>
        <position position="1"/>
    </location>
</feature>
<feature type="modified residue" description="Phosphoserine" evidence="9 11 12 13">
    <location>
        <position position="315"/>
    </location>
</feature>
<feature type="cross-link" description="Glycyl lysine isopeptide (Lys-Gly) (interchain with G-Cter in SUMO2)" evidence="14">
    <location>
        <position position="338"/>
    </location>
</feature>
<feature type="splice variant" id="VSP_046217" description="In isoform 2." evidence="7">
    <original>EDFTEVHQNWNAHSSASEHAKGYRNREFTRGFSRARYPRSCHGR</original>
    <variation>TGISHRYCGLGSRPLQSSESHKLFGFQMHIKVTFTCYFSLLSMQ</variation>
    <location>
        <begin position="346"/>
        <end position="389"/>
    </location>
</feature>
<feature type="splice variant" id="VSP_046218" description="In isoform 2." evidence="7">
    <location>
        <begin position="390"/>
        <end position="494"/>
    </location>
</feature>
<feature type="sequence variant" id="VAR_057795" description="In dbSNP:rs12331663.">
    <original>P</original>
    <variation>S</variation>
    <location>
        <position position="43"/>
    </location>
</feature>
<feature type="sequence variant" id="VAR_063101" description="In dbSNP:rs4691896." evidence="3">
    <original>I</original>
    <variation>V</variation>
    <location>
        <position position="162"/>
    </location>
</feature>
<feature type="strand" evidence="15">
    <location>
        <begin position="199"/>
        <end position="207"/>
    </location>
</feature>
<feature type="strand" evidence="15">
    <location>
        <begin position="209"/>
        <end position="216"/>
    </location>
</feature>
<feature type="strand" evidence="15">
    <location>
        <begin position="228"/>
        <end position="230"/>
    </location>
</feature>
<feature type="strand" evidence="15">
    <location>
        <begin position="234"/>
        <end position="245"/>
    </location>
</feature>
<feature type="strand" evidence="15">
    <location>
        <begin position="247"/>
        <end position="249"/>
    </location>
</feature>
<feature type="strand" evidence="15">
    <location>
        <begin position="251"/>
        <end position="254"/>
    </location>
</feature>
<feature type="helix" evidence="15">
    <location>
        <begin position="259"/>
        <end position="265"/>
    </location>
</feature>
<feature type="strand" evidence="15">
    <location>
        <begin position="272"/>
        <end position="275"/>
    </location>
</feature>
<sequence length="494" mass="53717">MEVVEAAAAQLETLKFNGTDFGVGEGPAAPSPGSAPVPGTQPPLQSFEGSPDAGQTVEVKPAGEQPLQPVLNAVAAGTPAPQPQPPAESPACGDCVTSPGAAEPARAPDSLETSDSDSDSDSETDSDSSSSSSSSSSSSSSSSSSCISLPPVLSDGDDDLQIEKENKNFPLKTKDELLLNELPSVEELTIILPEDIELKPLGMVSSIIEQLVIIESMTNLPPVNEETVIFKSDRQAAGKIFEIFGPVAHPFYVLRFNSSDHIESKGIKIKETMYFAPSMKDFTQYIFTEKLKQDKGSDASWKNDQEPPPEALDFSDDEKEKEAKQRKKSQIQGRKKLKSEFNEPGEDFTEVHQNWNAHSSASEHAKGYRNREFTRGFSRARYPRSCHGRPPPQHFYNSEHMVSQETSGFPSQRQNNPIMPQYPFPLPVFDMHNFPLRPPPPPPPPPVNMGWATPNMAAHPLLNLPYSLPPPPPPPPLPPPPSSGDSNSHFGPYY</sequence>
<protein>
    <recommendedName>
        <fullName>H/ACA ribonucleoprotein complex non-core subunit NAF1</fullName>
        <shortName>hNAF1</shortName>
    </recommendedName>
</protein>
<name>NAF1_HUMAN</name>
<proteinExistence type="evidence at protein level"/>